<comment type="catalytic activity">
    <reaction evidence="2">
        <text>GTP + H2O = 7,8-dihydroneopterin 3'-triphosphate + formate + H(+)</text>
        <dbReference type="Rhea" id="RHEA:17473"/>
        <dbReference type="ChEBI" id="CHEBI:15377"/>
        <dbReference type="ChEBI" id="CHEBI:15378"/>
        <dbReference type="ChEBI" id="CHEBI:15740"/>
        <dbReference type="ChEBI" id="CHEBI:37565"/>
        <dbReference type="ChEBI" id="CHEBI:58462"/>
        <dbReference type="EC" id="3.5.4.16"/>
    </reaction>
</comment>
<comment type="pathway">
    <text evidence="2">Cofactor biosynthesis; 7,8-dihydroneopterin triphosphate biosynthesis; 7,8-dihydroneopterin triphosphate from GTP: step 1/1.</text>
</comment>
<comment type="subunit">
    <text evidence="1">Toroid-shaped homodecamer, composed of two pentamers of five dimers.</text>
</comment>
<comment type="similarity">
    <text evidence="2">Belongs to the GTP cyclohydrolase I family.</text>
</comment>
<evidence type="ECO:0000250" key="1"/>
<evidence type="ECO:0000255" key="2">
    <source>
        <dbReference type="HAMAP-Rule" id="MF_00223"/>
    </source>
</evidence>
<reference key="1">
    <citation type="journal article" date="2004" name="Nat. Biotechnol.">
        <title>Complete sequence and comparative genome analysis of the dairy bacterium Streptococcus thermophilus.</title>
        <authorList>
            <person name="Bolotin A."/>
            <person name="Quinquis B."/>
            <person name="Renault P."/>
            <person name="Sorokin A."/>
            <person name="Ehrlich S.D."/>
            <person name="Kulakauskas S."/>
            <person name="Lapidus A."/>
            <person name="Goltsman E."/>
            <person name="Mazur M."/>
            <person name="Pusch G.D."/>
            <person name="Fonstein M."/>
            <person name="Overbeek R."/>
            <person name="Kyprides N."/>
            <person name="Purnelle B."/>
            <person name="Prozzi D."/>
            <person name="Ngui K."/>
            <person name="Masuy D."/>
            <person name="Hancy F."/>
            <person name="Burteau S."/>
            <person name="Boutry M."/>
            <person name="Delcour J."/>
            <person name="Goffeau A."/>
            <person name="Hols P."/>
        </authorList>
    </citation>
    <scope>NUCLEOTIDE SEQUENCE [LARGE SCALE GENOMIC DNA]</scope>
    <source>
        <strain>CNRZ 1066</strain>
    </source>
</reference>
<keyword id="KW-0342">GTP-binding</keyword>
<keyword id="KW-0378">Hydrolase</keyword>
<keyword id="KW-0479">Metal-binding</keyword>
<keyword id="KW-0547">Nucleotide-binding</keyword>
<keyword id="KW-0554">One-carbon metabolism</keyword>
<keyword id="KW-0862">Zinc</keyword>
<proteinExistence type="inferred from homology"/>
<feature type="chain" id="PRO_1000043750" description="GTP cyclohydrolase 1">
    <location>
        <begin position="1"/>
        <end position="187"/>
    </location>
</feature>
<feature type="binding site" evidence="2">
    <location>
        <position position="76"/>
    </location>
    <ligand>
        <name>Zn(2+)</name>
        <dbReference type="ChEBI" id="CHEBI:29105"/>
    </ligand>
</feature>
<feature type="binding site" evidence="2">
    <location>
        <position position="79"/>
    </location>
    <ligand>
        <name>Zn(2+)</name>
        <dbReference type="ChEBI" id="CHEBI:29105"/>
    </ligand>
</feature>
<feature type="binding site" evidence="2">
    <location>
        <position position="148"/>
    </location>
    <ligand>
        <name>Zn(2+)</name>
        <dbReference type="ChEBI" id="CHEBI:29105"/>
    </ligand>
</feature>
<organism>
    <name type="scientific">Streptococcus thermophilus (strain CNRZ 1066)</name>
    <dbReference type="NCBI Taxonomy" id="299768"/>
    <lineage>
        <taxon>Bacteria</taxon>
        <taxon>Bacillati</taxon>
        <taxon>Bacillota</taxon>
        <taxon>Bacilli</taxon>
        <taxon>Lactobacillales</taxon>
        <taxon>Streptococcaceae</taxon>
        <taxon>Streptococcus</taxon>
    </lineage>
</organism>
<accession>Q5LYM8</accession>
<name>GCH1_STRT1</name>
<dbReference type="EC" id="3.5.4.16" evidence="2"/>
<dbReference type="EMBL" id="CP000024">
    <property type="protein sequence ID" value="AAV63074.1"/>
    <property type="molecule type" value="Genomic_DNA"/>
</dbReference>
<dbReference type="RefSeq" id="WP_011226385.1">
    <property type="nucleotide sequence ID" value="NC_006449.1"/>
</dbReference>
<dbReference type="SMR" id="Q5LYM8"/>
<dbReference type="GeneID" id="66899290"/>
<dbReference type="KEGG" id="stc:str1544"/>
<dbReference type="HOGENOM" id="CLU_049768_3_3_9"/>
<dbReference type="UniPathway" id="UPA00848">
    <property type="reaction ID" value="UER00151"/>
</dbReference>
<dbReference type="GO" id="GO:0005737">
    <property type="term" value="C:cytoplasm"/>
    <property type="evidence" value="ECO:0007669"/>
    <property type="project" value="TreeGrafter"/>
</dbReference>
<dbReference type="GO" id="GO:0005525">
    <property type="term" value="F:GTP binding"/>
    <property type="evidence" value="ECO:0007669"/>
    <property type="project" value="UniProtKB-KW"/>
</dbReference>
<dbReference type="GO" id="GO:0003934">
    <property type="term" value="F:GTP cyclohydrolase I activity"/>
    <property type="evidence" value="ECO:0007669"/>
    <property type="project" value="UniProtKB-UniRule"/>
</dbReference>
<dbReference type="GO" id="GO:0008270">
    <property type="term" value="F:zinc ion binding"/>
    <property type="evidence" value="ECO:0007669"/>
    <property type="project" value="UniProtKB-UniRule"/>
</dbReference>
<dbReference type="GO" id="GO:0006730">
    <property type="term" value="P:one-carbon metabolic process"/>
    <property type="evidence" value="ECO:0007669"/>
    <property type="project" value="UniProtKB-UniRule"/>
</dbReference>
<dbReference type="GO" id="GO:0006729">
    <property type="term" value="P:tetrahydrobiopterin biosynthetic process"/>
    <property type="evidence" value="ECO:0007669"/>
    <property type="project" value="TreeGrafter"/>
</dbReference>
<dbReference type="GO" id="GO:0046654">
    <property type="term" value="P:tetrahydrofolate biosynthetic process"/>
    <property type="evidence" value="ECO:0007669"/>
    <property type="project" value="UniProtKB-UniRule"/>
</dbReference>
<dbReference type="FunFam" id="1.10.286.10:FF:000001">
    <property type="entry name" value="GTP cyclohydrolase 1"/>
    <property type="match status" value="1"/>
</dbReference>
<dbReference type="FunFam" id="3.30.1130.10:FF:000001">
    <property type="entry name" value="GTP cyclohydrolase 1"/>
    <property type="match status" value="1"/>
</dbReference>
<dbReference type="Gene3D" id="1.10.286.10">
    <property type="match status" value="1"/>
</dbReference>
<dbReference type="Gene3D" id="3.30.1130.10">
    <property type="match status" value="1"/>
</dbReference>
<dbReference type="HAMAP" id="MF_00223">
    <property type="entry name" value="FolE"/>
    <property type="match status" value="1"/>
</dbReference>
<dbReference type="InterPro" id="IPR043133">
    <property type="entry name" value="GTP-CH-I_C/QueF"/>
</dbReference>
<dbReference type="InterPro" id="IPR043134">
    <property type="entry name" value="GTP-CH-I_N"/>
</dbReference>
<dbReference type="InterPro" id="IPR001474">
    <property type="entry name" value="GTP_CycHdrlase_I"/>
</dbReference>
<dbReference type="InterPro" id="IPR018234">
    <property type="entry name" value="GTP_CycHdrlase_I_CS"/>
</dbReference>
<dbReference type="InterPro" id="IPR020602">
    <property type="entry name" value="GTP_CycHdrlase_I_dom"/>
</dbReference>
<dbReference type="NCBIfam" id="TIGR00063">
    <property type="entry name" value="folE"/>
    <property type="match status" value="1"/>
</dbReference>
<dbReference type="NCBIfam" id="NF006825">
    <property type="entry name" value="PRK09347.1-2"/>
    <property type="match status" value="1"/>
</dbReference>
<dbReference type="NCBIfam" id="NF006826">
    <property type="entry name" value="PRK09347.1-3"/>
    <property type="match status" value="1"/>
</dbReference>
<dbReference type="PANTHER" id="PTHR11109:SF7">
    <property type="entry name" value="GTP CYCLOHYDROLASE 1"/>
    <property type="match status" value="1"/>
</dbReference>
<dbReference type="PANTHER" id="PTHR11109">
    <property type="entry name" value="GTP CYCLOHYDROLASE I"/>
    <property type="match status" value="1"/>
</dbReference>
<dbReference type="Pfam" id="PF01227">
    <property type="entry name" value="GTP_cyclohydroI"/>
    <property type="match status" value="1"/>
</dbReference>
<dbReference type="SUPFAM" id="SSF55620">
    <property type="entry name" value="Tetrahydrobiopterin biosynthesis enzymes-like"/>
    <property type="match status" value="1"/>
</dbReference>
<dbReference type="PROSITE" id="PS00859">
    <property type="entry name" value="GTP_CYCLOHYDROL_1_1"/>
    <property type="match status" value="1"/>
</dbReference>
<dbReference type="PROSITE" id="PS00860">
    <property type="entry name" value="GTP_CYCLOHYDROL_1_2"/>
    <property type="match status" value="1"/>
</dbReference>
<gene>
    <name evidence="2" type="primary">folE</name>
    <name type="ordered locus">str1544</name>
</gene>
<protein>
    <recommendedName>
        <fullName evidence="2">GTP cyclohydrolase 1</fullName>
        <ecNumber evidence="2">3.5.4.16</ecNumber>
    </recommendedName>
    <alternativeName>
        <fullName evidence="2">GTP cyclohydrolase I</fullName>
        <shortName evidence="2">GTP-CH-I</shortName>
    </alternativeName>
</protein>
<sequence>MENQEKVEQAVYQLLEALGENPEREGLLDTPKRVAKMYAEMFSGLNEDPKDQFTAVFSEVHDEVVLVKDIPFYSMCEHHLVPFYGMAHVAYLPSGDKVTGLSKLARAVEVAARRPQLQERLTDQVATALEEALNPRGVFVMVEAEHMCMTMRGIKKPGSKTITTVAKGIYKEDREERKEILSLMRDF</sequence>